<evidence type="ECO:0000305" key="1"/>
<organism>
    <name type="scientific">Bacillus subtilis (strain 168)</name>
    <dbReference type="NCBI Taxonomy" id="224308"/>
    <lineage>
        <taxon>Bacteria</taxon>
        <taxon>Bacillati</taxon>
        <taxon>Bacillota</taxon>
        <taxon>Bacilli</taxon>
        <taxon>Bacillales</taxon>
        <taxon>Bacillaceae</taxon>
        <taxon>Bacillus</taxon>
    </lineage>
</organism>
<protein>
    <recommendedName>
        <fullName>Uncharacterized methyltransferase YdaC</fullName>
        <ecNumber>2.1.1.-</ecNumber>
    </recommendedName>
</protein>
<keyword id="KW-0489">Methyltransferase</keyword>
<keyword id="KW-1185">Reference proteome</keyword>
<keyword id="KW-0808">Transferase</keyword>
<accession>P96576</accession>
<accession>Q797M9</accession>
<proteinExistence type="inferred from homology"/>
<reference key="1">
    <citation type="submission" date="1997-03" db="EMBL/GenBank/DDBJ databases">
        <title>A 148 kbp sequence of the region between 35 and 47 degree of the Bacillus subtilis genome.</title>
        <authorList>
            <person name="Kasahara Y."/>
            <person name="Nakai S."/>
            <person name="Lee S."/>
            <person name="Sadaie Y."/>
            <person name="Ogasawara N."/>
        </authorList>
    </citation>
    <scope>NUCLEOTIDE SEQUENCE [GENOMIC DNA]</scope>
    <source>
        <strain>168</strain>
    </source>
</reference>
<reference key="2">
    <citation type="journal article" date="1997" name="Nature">
        <title>The complete genome sequence of the Gram-positive bacterium Bacillus subtilis.</title>
        <authorList>
            <person name="Kunst F."/>
            <person name="Ogasawara N."/>
            <person name="Moszer I."/>
            <person name="Albertini A.M."/>
            <person name="Alloni G."/>
            <person name="Azevedo V."/>
            <person name="Bertero M.G."/>
            <person name="Bessieres P."/>
            <person name="Bolotin A."/>
            <person name="Borchert S."/>
            <person name="Borriss R."/>
            <person name="Boursier L."/>
            <person name="Brans A."/>
            <person name="Braun M."/>
            <person name="Brignell S.C."/>
            <person name="Bron S."/>
            <person name="Brouillet S."/>
            <person name="Bruschi C.V."/>
            <person name="Caldwell B."/>
            <person name="Capuano V."/>
            <person name="Carter N.M."/>
            <person name="Choi S.-K."/>
            <person name="Codani J.-J."/>
            <person name="Connerton I.F."/>
            <person name="Cummings N.J."/>
            <person name="Daniel R.A."/>
            <person name="Denizot F."/>
            <person name="Devine K.M."/>
            <person name="Duesterhoeft A."/>
            <person name="Ehrlich S.D."/>
            <person name="Emmerson P.T."/>
            <person name="Entian K.-D."/>
            <person name="Errington J."/>
            <person name="Fabret C."/>
            <person name="Ferrari E."/>
            <person name="Foulger D."/>
            <person name="Fritz C."/>
            <person name="Fujita M."/>
            <person name="Fujita Y."/>
            <person name="Fuma S."/>
            <person name="Galizzi A."/>
            <person name="Galleron N."/>
            <person name="Ghim S.-Y."/>
            <person name="Glaser P."/>
            <person name="Goffeau A."/>
            <person name="Golightly E.J."/>
            <person name="Grandi G."/>
            <person name="Guiseppi G."/>
            <person name="Guy B.J."/>
            <person name="Haga K."/>
            <person name="Haiech J."/>
            <person name="Harwood C.R."/>
            <person name="Henaut A."/>
            <person name="Hilbert H."/>
            <person name="Holsappel S."/>
            <person name="Hosono S."/>
            <person name="Hullo M.-F."/>
            <person name="Itaya M."/>
            <person name="Jones L.-M."/>
            <person name="Joris B."/>
            <person name="Karamata D."/>
            <person name="Kasahara Y."/>
            <person name="Klaerr-Blanchard M."/>
            <person name="Klein C."/>
            <person name="Kobayashi Y."/>
            <person name="Koetter P."/>
            <person name="Koningstein G."/>
            <person name="Krogh S."/>
            <person name="Kumano M."/>
            <person name="Kurita K."/>
            <person name="Lapidus A."/>
            <person name="Lardinois S."/>
            <person name="Lauber J."/>
            <person name="Lazarevic V."/>
            <person name="Lee S.-M."/>
            <person name="Levine A."/>
            <person name="Liu H."/>
            <person name="Masuda S."/>
            <person name="Mauel C."/>
            <person name="Medigue C."/>
            <person name="Medina N."/>
            <person name="Mellado R.P."/>
            <person name="Mizuno M."/>
            <person name="Moestl D."/>
            <person name="Nakai S."/>
            <person name="Noback M."/>
            <person name="Noone D."/>
            <person name="O'Reilly M."/>
            <person name="Ogawa K."/>
            <person name="Ogiwara A."/>
            <person name="Oudega B."/>
            <person name="Park S.-H."/>
            <person name="Parro V."/>
            <person name="Pohl T.M."/>
            <person name="Portetelle D."/>
            <person name="Porwollik S."/>
            <person name="Prescott A.M."/>
            <person name="Presecan E."/>
            <person name="Pujic P."/>
            <person name="Purnelle B."/>
            <person name="Rapoport G."/>
            <person name="Rey M."/>
            <person name="Reynolds S."/>
            <person name="Rieger M."/>
            <person name="Rivolta C."/>
            <person name="Rocha E."/>
            <person name="Roche B."/>
            <person name="Rose M."/>
            <person name="Sadaie Y."/>
            <person name="Sato T."/>
            <person name="Scanlan E."/>
            <person name="Schleich S."/>
            <person name="Schroeter R."/>
            <person name="Scoffone F."/>
            <person name="Sekiguchi J."/>
            <person name="Sekowska A."/>
            <person name="Seror S.J."/>
            <person name="Serror P."/>
            <person name="Shin B.-S."/>
            <person name="Soldo B."/>
            <person name="Sorokin A."/>
            <person name="Tacconi E."/>
            <person name="Takagi T."/>
            <person name="Takahashi H."/>
            <person name="Takemaru K."/>
            <person name="Takeuchi M."/>
            <person name="Tamakoshi A."/>
            <person name="Tanaka T."/>
            <person name="Terpstra P."/>
            <person name="Tognoni A."/>
            <person name="Tosato V."/>
            <person name="Uchiyama S."/>
            <person name="Vandenbol M."/>
            <person name="Vannier F."/>
            <person name="Vassarotti A."/>
            <person name="Viari A."/>
            <person name="Wambutt R."/>
            <person name="Wedler E."/>
            <person name="Wedler H."/>
            <person name="Weitzenegger T."/>
            <person name="Winters P."/>
            <person name="Wipat A."/>
            <person name="Yamamoto H."/>
            <person name="Yamane K."/>
            <person name="Yasumoto K."/>
            <person name="Yata K."/>
            <person name="Yoshida K."/>
            <person name="Yoshikawa H.-F."/>
            <person name="Zumstein E."/>
            <person name="Yoshikawa H."/>
            <person name="Danchin A."/>
        </authorList>
    </citation>
    <scope>NUCLEOTIDE SEQUENCE [LARGE SCALE GENOMIC DNA]</scope>
    <source>
        <strain>168</strain>
    </source>
</reference>
<gene>
    <name type="primary">ydaC</name>
    <name type="ordered locus">BSU04180</name>
</gene>
<dbReference type="EC" id="2.1.1.-"/>
<dbReference type="EMBL" id="AB001488">
    <property type="protein sequence ID" value="BAA19256.1"/>
    <property type="molecule type" value="Genomic_DNA"/>
</dbReference>
<dbReference type="EMBL" id="AL009126">
    <property type="protein sequence ID" value="CAB12225.1"/>
    <property type="molecule type" value="Genomic_DNA"/>
</dbReference>
<dbReference type="PIR" id="C69768">
    <property type="entry name" value="C69768"/>
</dbReference>
<dbReference type="RefSeq" id="NP_388299.1">
    <property type="nucleotide sequence ID" value="NC_000964.3"/>
</dbReference>
<dbReference type="RefSeq" id="WP_009966584.1">
    <property type="nucleotide sequence ID" value="NC_000964.3"/>
</dbReference>
<dbReference type="SMR" id="P96576"/>
<dbReference type="FunCoup" id="P96576">
    <property type="interactions" value="45"/>
</dbReference>
<dbReference type="STRING" id="224308.BSU04180"/>
<dbReference type="PaxDb" id="224308-BSU04180"/>
<dbReference type="EnsemblBacteria" id="CAB12225">
    <property type="protein sequence ID" value="CAB12225"/>
    <property type="gene ID" value="BSU_04180"/>
</dbReference>
<dbReference type="GeneID" id="940142"/>
<dbReference type="KEGG" id="bsu:BSU04180"/>
<dbReference type="PATRIC" id="fig|224308.43.peg.435"/>
<dbReference type="eggNOG" id="COG2226">
    <property type="taxonomic scope" value="Bacteria"/>
</dbReference>
<dbReference type="InParanoid" id="P96576"/>
<dbReference type="OrthoDB" id="9772751at2"/>
<dbReference type="PhylomeDB" id="P96576"/>
<dbReference type="BioCyc" id="BSUB:BSU04180-MONOMER"/>
<dbReference type="Proteomes" id="UP000001570">
    <property type="component" value="Chromosome"/>
</dbReference>
<dbReference type="GO" id="GO:0008168">
    <property type="term" value="F:methyltransferase activity"/>
    <property type="evidence" value="ECO:0000318"/>
    <property type="project" value="GO_Central"/>
</dbReference>
<dbReference type="GO" id="GO:0032259">
    <property type="term" value="P:methylation"/>
    <property type="evidence" value="ECO:0007669"/>
    <property type="project" value="UniProtKB-KW"/>
</dbReference>
<dbReference type="CDD" id="cd02440">
    <property type="entry name" value="AdoMet_MTases"/>
    <property type="match status" value="1"/>
</dbReference>
<dbReference type="Gene3D" id="3.40.50.150">
    <property type="entry name" value="Vaccinia Virus protein VP39"/>
    <property type="match status" value="1"/>
</dbReference>
<dbReference type="InterPro" id="IPR041698">
    <property type="entry name" value="Methyltransf_25"/>
</dbReference>
<dbReference type="InterPro" id="IPR029063">
    <property type="entry name" value="SAM-dependent_MTases_sf"/>
</dbReference>
<dbReference type="PANTHER" id="PTHR43861:SF1">
    <property type="entry name" value="TRANS-ACONITATE 2-METHYLTRANSFERASE"/>
    <property type="match status" value="1"/>
</dbReference>
<dbReference type="PANTHER" id="PTHR43861">
    <property type="entry name" value="TRANS-ACONITATE 2-METHYLTRANSFERASE-RELATED"/>
    <property type="match status" value="1"/>
</dbReference>
<dbReference type="Pfam" id="PF13649">
    <property type="entry name" value="Methyltransf_25"/>
    <property type="match status" value="1"/>
</dbReference>
<dbReference type="SUPFAM" id="SSF53335">
    <property type="entry name" value="S-adenosyl-L-methionine-dependent methyltransferases"/>
    <property type="match status" value="1"/>
</dbReference>
<comment type="similarity">
    <text evidence="1">Belongs to the methyltransferase superfamily.</text>
</comment>
<sequence length="181" mass="20091">MIAGYIMAAENQTLNQWTINQLGITRGDSILEVGFGPGYCMQQMLKREKDVHLHGIDVSEAMLKLAARRVKPKGVRLIQGSIETFPLPASFYDKVISVNNYTIWNDQTKGIKQIYRALKPGGKAAITMQPREADASPEKTKSFGRQMIADFKAAGFEDIDIQFKNIKPELSVCATAKKPAT</sequence>
<feature type="chain" id="PRO_0000381936" description="Uncharacterized methyltransferase YdaC">
    <location>
        <begin position="1"/>
        <end position="181"/>
    </location>
</feature>
<name>YDAC_BACSU</name>